<reference key="1">
    <citation type="journal article" date="2009" name="Genome Res.">
        <title>Newly introduced genomic prophage islands are critical determinants of in vivo competitiveness in the Liverpool epidemic strain of Pseudomonas aeruginosa.</title>
        <authorList>
            <person name="Winstanley C."/>
            <person name="Langille M.G.I."/>
            <person name="Fothergill J.L."/>
            <person name="Kukavica-Ibrulj I."/>
            <person name="Paradis-Bleau C."/>
            <person name="Sanschagrin F."/>
            <person name="Thomson N.R."/>
            <person name="Winsor G.L."/>
            <person name="Quail M.A."/>
            <person name="Lennard N."/>
            <person name="Bignell A."/>
            <person name="Clarke L."/>
            <person name="Seeger K."/>
            <person name="Saunders D."/>
            <person name="Harris D."/>
            <person name="Parkhill J."/>
            <person name="Hancock R.E.W."/>
            <person name="Brinkman F.S.L."/>
            <person name="Levesque R.C."/>
        </authorList>
    </citation>
    <scope>NUCLEOTIDE SEQUENCE [LARGE SCALE GENOMIC DNA]</scope>
    <source>
        <strain>LESB58</strain>
    </source>
</reference>
<organism>
    <name type="scientific">Pseudomonas aeruginosa (strain LESB58)</name>
    <dbReference type="NCBI Taxonomy" id="557722"/>
    <lineage>
        <taxon>Bacteria</taxon>
        <taxon>Pseudomonadati</taxon>
        <taxon>Pseudomonadota</taxon>
        <taxon>Gammaproteobacteria</taxon>
        <taxon>Pseudomonadales</taxon>
        <taxon>Pseudomonadaceae</taxon>
        <taxon>Pseudomonas</taxon>
    </lineage>
</organism>
<protein>
    <recommendedName>
        <fullName evidence="1">ATP-dependent protease ATPase subunit HslU</fullName>
    </recommendedName>
    <alternativeName>
        <fullName evidence="1">Unfoldase HslU</fullName>
    </alternativeName>
</protein>
<proteinExistence type="inferred from homology"/>
<accession>B7V3E7</accession>
<name>HSLU_PSEA8</name>
<feature type="chain" id="PRO_1000119111" description="ATP-dependent protease ATPase subunit HslU">
    <location>
        <begin position="1"/>
        <end position="447"/>
    </location>
</feature>
<feature type="binding site" evidence="1">
    <location>
        <position position="17"/>
    </location>
    <ligand>
        <name>ATP</name>
        <dbReference type="ChEBI" id="CHEBI:30616"/>
    </ligand>
</feature>
<feature type="binding site" evidence="1">
    <location>
        <begin position="59"/>
        <end position="64"/>
    </location>
    <ligand>
        <name>ATP</name>
        <dbReference type="ChEBI" id="CHEBI:30616"/>
    </ligand>
</feature>
<feature type="binding site" evidence="1">
    <location>
        <position position="256"/>
    </location>
    <ligand>
        <name>ATP</name>
        <dbReference type="ChEBI" id="CHEBI:30616"/>
    </ligand>
</feature>
<feature type="binding site" evidence="1">
    <location>
        <position position="321"/>
    </location>
    <ligand>
        <name>ATP</name>
        <dbReference type="ChEBI" id="CHEBI:30616"/>
    </ligand>
</feature>
<feature type="binding site" evidence="1">
    <location>
        <position position="393"/>
    </location>
    <ligand>
        <name>ATP</name>
        <dbReference type="ChEBI" id="CHEBI:30616"/>
    </ligand>
</feature>
<comment type="function">
    <text evidence="1">ATPase subunit of a proteasome-like degradation complex; this subunit has chaperone activity. The binding of ATP and its subsequent hydrolysis by HslU are essential for unfolding of protein substrates subsequently hydrolyzed by HslV. HslU recognizes the N-terminal part of its protein substrates and unfolds these before they are guided to HslV for hydrolysis.</text>
</comment>
<comment type="subunit">
    <text evidence="1">A double ring-shaped homohexamer of HslV is capped on each side by a ring-shaped HslU homohexamer. The assembly of the HslU/HslV complex is dependent on binding of ATP.</text>
</comment>
<comment type="subcellular location">
    <subcellularLocation>
        <location evidence="1">Cytoplasm</location>
    </subcellularLocation>
</comment>
<comment type="similarity">
    <text evidence="1">Belongs to the ClpX chaperone family. HslU subfamily.</text>
</comment>
<gene>
    <name evidence="1" type="primary">hslU</name>
    <name type="ordered locus">PLES_54441</name>
</gene>
<sequence>MSMTPREIVHELNRHIIGQDDAKRAVAIALRNRWRRMQLPAELRAEVTPKNILMIGPTGVGKTEIARRLARLANAPFIKVEATKFTEVGYVGRDVESIIRDLADAAVKMLREQEIQKVKYRAEDAAEERILDALLPAARPAMGFGDEPAREDSNTRQLFRKRLREGQLDDKEIDIEVADNPAGVEIMAPPGMEEMTNQLQNLFSGMSKGKKKTRKLKVAEALKLIRDEEAVRLVNEEELKARALEAVEQHGIVFIDEIDKIAKRANAGGADVSREGVQRDLLPLIEGCTVNTKLGMVKTDHILFIASGAFHLSKPSDLVPELQGRLPIRVELKALSPNDFERILTEPHASLTEQYRELLKTEGLAIEFAEDGIKRLAEIAWQVNEKTENIGARRLHTLLERLLEEVSFSAADLASEHSDKPILIDAGYVNSHLGELAEDEDLSRYIL</sequence>
<keyword id="KW-0067">ATP-binding</keyword>
<keyword id="KW-0143">Chaperone</keyword>
<keyword id="KW-0963">Cytoplasm</keyword>
<keyword id="KW-0547">Nucleotide-binding</keyword>
<keyword id="KW-0346">Stress response</keyword>
<evidence type="ECO:0000255" key="1">
    <source>
        <dbReference type="HAMAP-Rule" id="MF_00249"/>
    </source>
</evidence>
<dbReference type="EMBL" id="FM209186">
    <property type="protein sequence ID" value="CAW30198.1"/>
    <property type="molecule type" value="Genomic_DNA"/>
</dbReference>
<dbReference type="RefSeq" id="WP_003095854.1">
    <property type="nucleotide sequence ID" value="NC_011770.1"/>
</dbReference>
<dbReference type="SMR" id="B7V3E7"/>
<dbReference type="KEGG" id="pag:PLES_54441"/>
<dbReference type="HOGENOM" id="CLU_033123_0_0_6"/>
<dbReference type="GO" id="GO:0009376">
    <property type="term" value="C:HslUV protease complex"/>
    <property type="evidence" value="ECO:0007669"/>
    <property type="project" value="UniProtKB-UniRule"/>
</dbReference>
<dbReference type="GO" id="GO:0005524">
    <property type="term" value="F:ATP binding"/>
    <property type="evidence" value="ECO:0007669"/>
    <property type="project" value="UniProtKB-UniRule"/>
</dbReference>
<dbReference type="GO" id="GO:0016887">
    <property type="term" value="F:ATP hydrolysis activity"/>
    <property type="evidence" value="ECO:0007669"/>
    <property type="project" value="InterPro"/>
</dbReference>
<dbReference type="GO" id="GO:0008233">
    <property type="term" value="F:peptidase activity"/>
    <property type="evidence" value="ECO:0007669"/>
    <property type="project" value="InterPro"/>
</dbReference>
<dbReference type="GO" id="GO:0036402">
    <property type="term" value="F:proteasome-activating activity"/>
    <property type="evidence" value="ECO:0007669"/>
    <property type="project" value="UniProtKB-UniRule"/>
</dbReference>
<dbReference type="GO" id="GO:0043335">
    <property type="term" value="P:protein unfolding"/>
    <property type="evidence" value="ECO:0007669"/>
    <property type="project" value="UniProtKB-UniRule"/>
</dbReference>
<dbReference type="GO" id="GO:0051603">
    <property type="term" value="P:proteolysis involved in protein catabolic process"/>
    <property type="evidence" value="ECO:0007669"/>
    <property type="project" value="TreeGrafter"/>
</dbReference>
<dbReference type="CDD" id="cd19498">
    <property type="entry name" value="RecA-like_HslU"/>
    <property type="match status" value="1"/>
</dbReference>
<dbReference type="FunFam" id="1.10.8.10:FF:000028">
    <property type="entry name" value="ATP-dependent protease ATPase subunit HslU"/>
    <property type="match status" value="1"/>
</dbReference>
<dbReference type="FunFam" id="3.40.50.300:FF:000213">
    <property type="entry name" value="ATP-dependent protease ATPase subunit HslU"/>
    <property type="match status" value="1"/>
</dbReference>
<dbReference type="FunFam" id="3.40.50.300:FF:000220">
    <property type="entry name" value="ATP-dependent protease ATPase subunit HslU"/>
    <property type="match status" value="1"/>
</dbReference>
<dbReference type="Gene3D" id="1.10.8.60">
    <property type="match status" value="1"/>
</dbReference>
<dbReference type="Gene3D" id="3.40.50.300">
    <property type="entry name" value="P-loop containing nucleotide triphosphate hydrolases"/>
    <property type="match status" value="2"/>
</dbReference>
<dbReference type="HAMAP" id="MF_00249">
    <property type="entry name" value="HslU"/>
    <property type="match status" value="1"/>
</dbReference>
<dbReference type="InterPro" id="IPR003593">
    <property type="entry name" value="AAA+_ATPase"/>
</dbReference>
<dbReference type="InterPro" id="IPR050052">
    <property type="entry name" value="ATP-dep_Clp_protease_ClpX"/>
</dbReference>
<dbReference type="InterPro" id="IPR003959">
    <property type="entry name" value="ATPase_AAA_core"/>
</dbReference>
<dbReference type="InterPro" id="IPR019489">
    <property type="entry name" value="Clp_ATPase_C"/>
</dbReference>
<dbReference type="InterPro" id="IPR004491">
    <property type="entry name" value="HslU"/>
</dbReference>
<dbReference type="InterPro" id="IPR027417">
    <property type="entry name" value="P-loop_NTPase"/>
</dbReference>
<dbReference type="NCBIfam" id="TIGR00390">
    <property type="entry name" value="hslU"/>
    <property type="match status" value="1"/>
</dbReference>
<dbReference type="NCBIfam" id="NF003544">
    <property type="entry name" value="PRK05201.1"/>
    <property type="match status" value="1"/>
</dbReference>
<dbReference type="PANTHER" id="PTHR48102">
    <property type="entry name" value="ATP-DEPENDENT CLP PROTEASE ATP-BINDING SUBUNIT CLPX-LIKE, MITOCHONDRIAL-RELATED"/>
    <property type="match status" value="1"/>
</dbReference>
<dbReference type="PANTHER" id="PTHR48102:SF3">
    <property type="entry name" value="ATP-DEPENDENT PROTEASE ATPASE SUBUNIT HSLU"/>
    <property type="match status" value="1"/>
</dbReference>
<dbReference type="Pfam" id="PF00004">
    <property type="entry name" value="AAA"/>
    <property type="match status" value="1"/>
</dbReference>
<dbReference type="Pfam" id="PF07724">
    <property type="entry name" value="AAA_2"/>
    <property type="match status" value="1"/>
</dbReference>
<dbReference type="SMART" id="SM00382">
    <property type="entry name" value="AAA"/>
    <property type="match status" value="1"/>
</dbReference>
<dbReference type="SMART" id="SM01086">
    <property type="entry name" value="ClpB_D2-small"/>
    <property type="match status" value="1"/>
</dbReference>
<dbReference type="SUPFAM" id="SSF52540">
    <property type="entry name" value="P-loop containing nucleoside triphosphate hydrolases"/>
    <property type="match status" value="1"/>
</dbReference>